<name>HEM1_CORGL</name>
<accession>P0C543</accession>
<accession>Q8GMZ2</accession>
<accession>Q8NT91</accession>
<keyword id="KW-0521">NADP</keyword>
<keyword id="KW-0560">Oxidoreductase</keyword>
<keyword id="KW-0627">Porphyrin biosynthesis</keyword>
<keyword id="KW-1185">Reference proteome</keyword>
<dbReference type="EC" id="1.2.1.70" evidence="1"/>
<dbReference type="EMBL" id="BA000036">
    <property type="protein sequence ID" value="BAB97810.1"/>
    <property type="molecule type" value="Genomic_DNA"/>
</dbReference>
<dbReference type="EMBL" id="BX927149">
    <property type="protein sequence ID" value="CAF19133.1"/>
    <property type="molecule type" value="Genomic_DNA"/>
</dbReference>
<dbReference type="RefSeq" id="NP_599664.2">
    <property type="nucleotide sequence ID" value="NC_003450.3"/>
</dbReference>
<dbReference type="SMR" id="P0C543"/>
<dbReference type="STRING" id="196627.cg0497"/>
<dbReference type="KEGG" id="cgb:cg0497"/>
<dbReference type="KEGG" id="cgl:Cgl0417"/>
<dbReference type="PATRIC" id="fig|196627.13.peg.415"/>
<dbReference type="eggNOG" id="COG0373">
    <property type="taxonomic scope" value="Bacteria"/>
</dbReference>
<dbReference type="HOGENOM" id="CLU_035113_4_0_11"/>
<dbReference type="OrthoDB" id="110209at2"/>
<dbReference type="BioCyc" id="CORYNE:G18NG-9974-MONOMER"/>
<dbReference type="UniPathway" id="UPA00251">
    <property type="reaction ID" value="UER00316"/>
</dbReference>
<dbReference type="Proteomes" id="UP000000582">
    <property type="component" value="Chromosome"/>
</dbReference>
<dbReference type="Proteomes" id="UP000001009">
    <property type="component" value="Chromosome"/>
</dbReference>
<dbReference type="GO" id="GO:0008883">
    <property type="term" value="F:glutamyl-tRNA reductase activity"/>
    <property type="evidence" value="ECO:0007669"/>
    <property type="project" value="UniProtKB-UniRule"/>
</dbReference>
<dbReference type="GO" id="GO:0050661">
    <property type="term" value="F:NADP binding"/>
    <property type="evidence" value="ECO:0007669"/>
    <property type="project" value="InterPro"/>
</dbReference>
<dbReference type="GO" id="GO:0019353">
    <property type="term" value="P:protoporphyrinogen IX biosynthetic process from glutamate"/>
    <property type="evidence" value="ECO:0007669"/>
    <property type="project" value="TreeGrafter"/>
</dbReference>
<dbReference type="CDD" id="cd05213">
    <property type="entry name" value="NAD_bind_Glutamyl_tRNA_reduct"/>
    <property type="match status" value="1"/>
</dbReference>
<dbReference type="FunFam" id="3.30.460.30:FF:000001">
    <property type="entry name" value="Glutamyl-tRNA reductase"/>
    <property type="match status" value="1"/>
</dbReference>
<dbReference type="Gene3D" id="3.30.460.30">
    <property type="entry name" value="Glutamyl-tRNA reductase, N-terminal domain"/>
    <property type="match status" value="1"/>
</dbReference>
<dbReference type="Gene3D" id="3.40.50.720">
    <property type="entry name" value="NAD(P)-binding Rossmann-like Domain"/>
    <property type="match status" value="1"/>
</dbReference>
<dbReference type="HAMAP" id="MF_00087">
    <property type="entry name" value="Glu_tRNA_reductase"/>
    <property type="match status" value="1"/>
</dbReference>
<dbReference type="InterPro" id="IPR000343">
    <property type="entry name" value="4pyrrol_synth_GluRdtase"/>
</dbReference>
<dbReference type="InterPro" id="IPR015896">
    <property type="entry name" value="4pyrrol_synth_GluRdtase_dimer"/>
</dbReference>
<dbReference type="InterPro" id="IPR015895">
    <property type="entry name" value="4pyrrol_synth_GluRdtase_N"/>
</dbReference>
<dbReference type="InterPro" id="IPR018214">
    <property type="entry name" value="GluRdtase_CS"/>
</dbReference>
<dbReference type="InterPro" id="IPR036453">
    <property type="entry name" value="GluRdtase_dimer_dom_sf"/>
</dbReference>
<dbReference type="InterPro" id="IPR036343">
    <property type="entry name" value="GluRdtase_N_sf"/>
</dbReference>
<dbReference type="InterPro" id="IPR036291">
    <property type="entry name" value="NAD(P)-bd_dom_sf"/>
</dbReference>
<dbReference type="InterPro" id="IPR006151">
    <property type="entry name" value="Shikm_DH/Glu-tRNA_Rdtase"/>
</dbReference>
<dbReference type="NCBIfam" id="TIGR01035">
    <property type="entry name" value="hemA"/>
    <property type="match status" value="1"/>
</dbReference>
<dbReference type="NCBIfam" id="NF000744">
    <property type="entry name" value="PRK00045.1-3"/>
    <property type="match status" value="1"/>
</dbReference>
<dbReference type="PANTHER" id="PTHR43013">
    <property type="entry name" value="GLUTAMYL-TRNA REDUCTASE"/>
    <property type="match status" value="1"/>
</dbReference>
<dbReference type="PANTHER" id="PTHR43013:SF1">
    <property type="entry name" value="GLUTAMYL-TRNA REDUCTASE"/>
    <property type="match status" value="1"/>
</dbReference>
<dbReference type="Pfam" id="PF00745">
    <property type="entry name" value="GlutR_dimer"/>
    <property type="match status" value="1"/>
</dbReference>
<dbReference type="Pfam" id="PF05201">
    <property type="entry name" value="GlutR_N"/>
    <property type="match status" value="1"/>
</dbReference>
<dbReference type="Pfam" id="PF01488">
    <property type="entry name" value="Shikimate_DH"/>
    <property type="match status" value="1"/>
</dbReference>
<dbReference type="PIRSF" id="PIRSF000445">
    <property type="entry name" value="4pyrrol_synth_GluRdtase"/>
    <property type="match status" value="1"/>
</dbReference>
<dbReference type="SUPFAM" id="SSF69742">
    <property type="entry name" value="Glutamyl tRNA-reductase catalytic, N-terminal domain"/>
    <property type="match status" value="1"/>
</dbReference>
<dbReference type="SUPFAM" id="SSF69075">
    <property type="entry name" value="Glutamyl tRNA-reductase dimerization domain"/>
    <property type="match status" value="1"/>
</dbReference>
<dbReference type="SUPFAM" id="SSF51735">
    <property type="entry name" value="NAD(P)-binding Rossmann-fold domains"/>
    <property type="match status" value="1"/>
</dbReference>
<dbReference type="PROSITE" id="PS00747">
    <property type="entry name" value="GLUTR"/>
    <property type="match status" value="1"/>
</dbReference>
<evidence type="ECO:0000255" key="1">
    <source>
        <dbReference type="HAMAP-Rule" id="MF_00087"/>
    </source>
</evidence>
<organism>
    <name type="scientific">Corynebacterium glutamicum (strain ATCC 13032 / DSM 20300 / JCM 1318 / BCRC 11384 / CCUG 27702 / LMG 3730 / NBRC 12168 / NCIMB 10025 / NRRL B-2784 / 534)</name>
    <dbReference type="NCBI Taxonomy" id="196627"/>
    <lineage>
        <taxon>Bacteria</taxon>
        <taxon>Bacillati</taxon>
        <taxon>Actinomycetota</taxon>
        <taxon>Actinomycetes</taxon>
        <taxon>Mycobacteriales</taxon>
        <taxon>Corynebacteriaceae</taxon>
        <taxon>Corynebacterium</taxon>
    </lineage>
</organism>
<protein>
    <recommendedName>
        <fullName evidence="1">Glutamyl-tRNA reductase</fullName>
        <shortName evidence="1">GluTR</shortName>
        <ecNumber evidence="1">1.2.1.70</ecNumber>
    </recommendedName>
</protein>
<reference key="1">
    <citation type="journal article" date="2003" name="Appl. Microbiol. Biotechnol.">
        <title>The Corynebacterium glutamicum genome: features and impacts on biotechnological processes.</title>
        <authorList>
            <person name="Ikeda M."/>
            <person name="Nakagawa S."/>
        </authorList>
    </citation>
    <scope>NUCLEOTIDE SEQUENCE [LARGE SCALE GENOMIC DNA]</scope>
    <source>
        <strain>ATCC 13032 / DSM 20300 / JCM 1318 / BCRC 11384 / CCUG 27702 / LMG 3730 / NBRC 12168 / NCIMB 10025 / NRRL B-2784 / 534</strain>
    </source>
</reference>
<reference key="2">
    <citation type="journal article" date="2003" name="J. Biotechnol.">
        <title>The complete Corynebacterium glutamicum ATCC 13032 genome sequence and its impact on the production of L-aspartate-derived amino acids and vitamins.</title>
        <authorList>
            <person name="Kalinowski J."/>
            <person name="Bathe B."/>
            <person name="Bartels D."/>
            <person name="Bischoff N."/>
            <person name="Bott M."/>
            <person name="Burkovski A."/>
            <person name="Dusch N."/>
            <person name="Eggeling L."/>
            <person name="Eikmanns B.J."/>
            <person name="Gaigalat L."/>
            <person name="Goesmann A."/>
            <person name="Hartmann M."/>
            <person name="Huthmacher K."/>
            <person name="Kraemer R."/>
            <person name="Linke B."/>
            <person name="McHardy A.C."/>
            <person name="Meyer F."/>
            <person name="Moeckel B."/>
            <person name="Pfefferle W."/>
            <person name="Puehler A."/>
            <person name="Rey D.A."/>
            <person name="Rueckert C."/>
            <person name="Rupp O."/>
            <person name="Sahm H."/>
            <person name="Wendisch V.F."/>
            <person name="Wiegraebe I."/>
            <person name="Tauch A."/>
        </authorList>
    </citation>
    <scope>NUCLEOTIDE SEQUENCE [LARGE SCALE GENOMIC DNA]</scope>
    <source>
        <strain>ATCC 13032 / DSM 20300 / JCM 1318 / BCRC 11384 / CCUG 27702 / LMG 3730 / NBRC 12168 / NCIMB 10025 / NRRL B-2784 / 534</strain>
    </source>
</reference>
<gene>
    <name evidence="1" type="primary">hemA</name>
    <name type="ordered locus">Cgl0417</name>
    <name type="ordered locus">cg0497</name>
</gene>
<proteinExistence type="inferred from homology"/>
<feature type="chain" id="PRO_0000114017" description="Glutamyl-tRNA reductase">
    <location>
        <begin position="1"/>
        <end position="463"/>
    </location>
</feature>
<feature type="active site" description="Nucleophile" evidence="1">
    <location>
        <position position="50"/>
    </location>
</feature>
<feature type="binding site" evidence="1">
    <location>
        <begin position="49"/>
        <end position="52"/>
    </location>
    <ligand>
        <name>substrate</name>
    </ligand>
</feature>
<feature type="binding site" evidence="1">
    <location>
        <position position="109"/>
    </location>
    <ligand>
        <name>substrate</name>
    </ligand>
</feature>
<feature type="binding site" evidence="1">
    <location>
        <begin position="114"/>
        <end position="116"/>
    </location>
    <ligand>
        <name>substrate</name>
    </ligand>
</feature>
<feature type="binding site" evidence="1">
    <location>
        <position position="120"/>
    </location>
    <ligand>
        <name>substrate</name>
    </ligand>
</feature>
<feature type="binding site" evidence="1">
    <location>
        <begin position="196"/>
        <end position="201"/>
    </location>
    <ligand>
        <name>NADP(+)</name>
        <dbReference type="ChEBI" id="CHEBI:58349"/>
    </ligand>
</feature>
<feature type="site" description="Important for activity" evidence="1">
    <location>
        <position position="99"/>
    </location>
</feature>
<comment type="function">
    <text evidence="1">Catalyzes the NADPH-dependent reduction of glutamyl-tRNA(Glu) to glutamate 1-semialdehyde (GSA).</text>
</comment>
<comment type="catalytic activity">
    <reaction evidence="1">
        <text>(S)-4-amino-5-oxopentanoate + tRNA(Glu) + NADP(+) = L-glutamyl-tRNA(Glu) + NADPH + H(+)</text>
        <dbReference type="Rhea" id="RHEA:12344"/>
        <dbReference type="Rhea" id="RHEA-COMP:9663"/>
        <dbReference type="Rhea" id="RHEA-COMP:9680"/>
        <dbReference type="ChEBI" id="CHEBI:15378"/>
        <dbReference type="ChEBI" id="CHEBI:57501"/>
        <dbReference type="ChEBI" id="CHEBI:57783"/>
        <dbReference type="ChEBI" id="CHEBI:58349"/>
        <dbReference type="ChEBI" id="CHEBI:78442"/>
        <dbReference type="ChEBI" id="CHEBI:78520"/>
        <dbReference type="EC" id="1.2.1.70"/>
    </reaction>
</comment>
<comment type="pathway">
    <text evidence="1">Porphyrin-containing compound metabolism; protoporphyrin-IX biosynthesis; 5-aminolevulinate from L-glutamyl-tRNA(Glu): step 1/2.</text>
</comment>
<comment type="subunit">
    <text evidence="1">Homodimer.</text>
</comment>
<comment type="domain">
    <text evidence="1">Possesses an unusual extended V-shaped dimeric structure with each monomer consisting of three distinct domains arranged along a curved 'spinal' alpha-helix. The N-terminal catalytic domain specifically recognizes the glutamate moiety of the substrate. The second domain is the NADPH-binding domain, and the third C-terminal domain is responsible for dimerization.</text>
</comment>
<comment type="miscellaneous">
    <text evidence="1">During catalysis, the active site Cys acts as a nucleophile attacking the alpha-carbonyl group of tRNA-bound glutamate with the formation of a thioester intermediate between enzyme and glutamate, and the concomitant release of tRNA(Glu). The thioester intermediate is finally reduced by direct hydride transfer from NADPH, to form the product GSA.</text>
</comment>
<comment type="similarity">
    <text evidence="1">Belongs to the glutamyl-tRNA reductase family.</text>
</comment>
<sequence>MSVLIVGMSHRSAPVSLLERLSMDDSVRGETTQALLGRASLSEALIVSTCNRLEVYTVTSSFHTGVNDVVEVLHEASGVDIETLRGYLYVRYADAAAEHMLVVTSGLDSMVLGEQQIIGQVRTAYQAANEYGSVGPALHSLTQTALHTGKRVHSETAIDDAGASMVSFAVDRALVQMGLDSEAEAPLSGKTALVLGAGAMSSLAATHLGRAGISNLIMANRTLERAERLAEHSLEAGVPAEVVEYDQRASAYNRVDLVVSATGADDFTVKPEDIPEGASLMLVDLSMPRDIDDACADLPGVDLVNIERLHKASREGGSGMAPSEEEALAIVREELDSFTSEQRIRDIVPAVSALRRQAASVGSDELDRLRQRAPGISEVEWGEVEKTVRRVVDKLLHEPTVRVKELAARSGSISYDSALQELFGLESLASTAAPATTSVNASELPDAGIVAFVNAPSATQTRE</sequence>